<comment type="function">
    <text evidence="1">Catalyzes the interconversion of 2-phosphoglycerate and 3-phosphoglycerate.</text>
</comment>
<comment type="catalytic activity">
    <reaction evidence="1">
        <text>(2R)-2-phosphoglycerate = (2R)-3-phosphoglycerate</text>
        <dbReference type="Rhea" id="RHEA:15901"/>
        <dbReference type="ChEBI" id="CHEBI:58272"/>
        <dbReference type="ChEBI" id="CHEBI:58289"/>
        <dbReference type="EC" id="5.4.2.11"/>
    </reaction>
</comment>
<comment type="pathway">
    <text evidence="1">Carbohydrate degradation; glycolysis; pyruvate from D-glyceraldehyde 3-phosphate: step 3/5.</text>
</comment>
<comment type="similarity">
    <text evidence="1">Belongs to the phosphoglycerate mutase family. BPG-dependent PGAM subfamily.</text>
</comment>
<organism>
    <name type="scientific">Nocardioides sp. (strain ATCC BAA-499 / JS614)</name>
    <dbReference type="NCBI Taxonomy" id="196162"/>
    <lineage>
        <taxon>Bacteria</taxon>
        <taxon>Bacillati</taxon>
        <taxon>Actinomycetota</taxon>
        <taxon>Actinomycetes</taxon>
        <taxon>Propionibacteriales</taxon>
        <taxon>Nocardioidaceae</taxon>
        <taxon>Nocardioides</taxon>
    </lineage>
</organism>
<evidence type="ECO:0000255" key="1">
    <source>
        <dbReference type="HAMAP-Rule" id="MF_01039"/>
    </source>
</evidence>
<gene>
    <name evidence="1" type="primary">gpmA</name>
    <name type="ordered locus">Noca_4043</name>
</gene>
<feature type="chain" id="PRO_1000064083" description="2,3-bisphosphoglycerate-dependent phosphoglycerate mutase">
    <location>
        <begin position="1"/>
        <end position="247"/>
    </location>
</feature>
<feature type="active site" description="Tele-phosphohistidine intermediate" evidence="1">
    <location>
        <position position="10"/>
    </location>
</feature>
<feature type="active site" description="Proton donor/acceptor" evidence="1">
    <location>
        <position position="88"/>
    </location>
</feature>
<feature type="binding site" evidence="1">
    <location>
        <begin position="9"/>
        <end position="16"/>
    </location>
    <ligand>
        <name>substrate</name>
    </ligand>
</feature>
<feature type="binding site" evidence="1">
    <location>
        <begin position="22"/>
        <end position="23"/>
    </location>
    <ligand>
        <name>substrate</name>
    </ligand>
</feature>
<feature type="binding site" evidence="1">
    <location>
        <position position="61"/>
    </location>
    <ligand>
        <name>substrate</name>
    </ligand>
</feature>
<feature type="binding site" evidence="1">
    <location>
        <begin position="88"/>
        <end position="91"/>
    </location>
    <ligand>
        <name>substrate</name>
    </ligand>
</feature>
<feature type="binding site" evidence="1">
    <location>
        <position position="99"/>
    </location>
    <ligand>
        <name>substrate</name>
    </ligand>
</feature>
<feature type="binding site" evidence="1">
    <location>
        <begin position="115"/>
        <end position="116"/>
    </location>
    <ligand>
        <name>substrate</name>
    </ligand>
</feature>
<feature type="binding site" evidence="1">
    <location>
        <begin position="183"/>
        <end position="184"/>
    </location>
    <ligand>
        <name>substrate</name>
    </ligand>
</feature>
<feature type="site" description="Transition state stabilizer" evidence="1">
    <location>
        <position position="182"/>
    </location>
</feature>
<keyword id="KW-0312">Gluconeogenesis</keyword>
<keyword id="KW-0324">Glycolysis</keyword>
<keyword id="KW-0413">Isomerase</keyword>
<keyword id="KW-1185">Reference proteome</keyword>
<reference key="1">
    <citation type="submission" date="2006-12" db="EMBL/GenBank/DDBJ databases">
        <title>Complete sequence of chromosome 1 of Nocardioides sp. JS614.</title>
        <authorList>
            <person name="Copeland A."/>
            <person name="Lucas S."/>
            <person name="Lapidus A."/>
            <person name="Barry K."/>
            <person name="Detter J.C."/>
            <person name="Glavina del Rio T."/>
            <person name="Hammon N."/>
            <person name="Israni S."/>
            <person name="Dalin E."/>
            <person name="Tice H."/>
            <person name="Pitluck S."/>
            <person name="Thompson L.S."/>
            <person name="Brettin T."/>
            <person name="Bruce D."/>
            <person name="Han C."/>
            <person name="Tapia R."/>
            <person name="Schmutz J."/>
            <person name="Larimer F."/>
            <person name="Land M."/>
            <person name="Hauser L."/>
            <person name="Kyrpides N."/>
            <person name="Kim E."/>
            <person name="Mattes T."/>
            <person name="Gossett J."/>
            <person name="Richardson P."/>
        </authorList>
    </citation>
    <scope>NUCLEOTIDE SEQUENCE [LARGE SCALE GENOMIC DNA]</scope>
    <source>
        <strain>ATCC BAA-499 / JS614</strain>
    </source>
</reference>
<proteinExistence type="inferred from homology"/>
<name>GPMA_NOCSJ</name>
<accession>A1SP05</accession>
<dbReference type="EC" id="5.4.2.11" evidence="1"/>
<dbReference type="EMBL" id="CP000509">
    <property type="protein sequence ID" value="ABL83540.1"/>
    <property type="molecule type" value="Genomic_DNA"/>
</dbReference>
<dbReference type="RefSeq" id="WP_011757469.1">
    <property type="nucleotide sequence ID" value="NC_008699.1"/>
</dbReference>
<dbReference type="SMR" id="A1SP05"/>
<dbReference type="STRING" id="196162.Noca_4043"/>
<dbReference type="KEGG" id="nca:Noca_4043"/>
<dbReference type="eggNOG" id="COG0588">
    <property type="taxonomic scope" value="Bacteria"/>
</dbReference>
<dbReference type="HOGENOM" id="CLU_033323_1_1_11"/>
<dbReference type="OrthoDB" id="9781415at2"/>
<dbReference type="UniPathway" id="UPA00109">
    <property type="reaction ID" value="UER00186"/>
</dbReference>
<dbReference type="Proteomes" id="UP000000640">
    <property type="component" value="Chromosome"/>
</dbReference>
<dbReference type="GO" id="GO:0004619">
    <property type="term" value="F:phosphoglycerate mutase activity"/>
    <property type="evidence" value="ECO:0007669"/>
    <property type="project" value="UniProtKB-EC"/>
</dbReference>
<dbReference type="GO" id="GO:0006094">
    <property type="term" value="P:gluconeogenesis"/>
    <property type="evidence" value="ECO:0007669"/>
    <property type="project" value="UniProtKB-UniRule"/>
</dbReference>
<dbReference type="GO" id="GO:0006096">
    <property type="term" value="P:glycolytic process"/>
    <property type="evidence" value="ECO:0007669"/>
    <property type="project" value="UniProtKB-UniRule"/>
</dbReference>
<dbReference type="CDD" id="cd07067">
    <property type="entry name" value="HP_PGM_like"/>
    <property type="match status" value="1"/>
</dbReference>
<dbReference type="FunFam" id="3.40.50.1240:FF:000003">
    <property type="entry name" value="2,3-bisphosphoglycerate-dependent phosphoglycerate mutase"/>
    <property type="match status" value="1"/>
</dbReference>
<dbReference type="Gene3D" id="3.40.50.1240">
    <property type="entry name" value="Phosphoglycerate mutase-like"/>
    <property type="match status" value="1"/>
</dbReference>
<dbReference type="HAMAP" id="MF_01039">
    <property type="entry name" value="PGAM_GpmA"/>
    <property type="match status" value="1"/>
</dbReference>
<dbReference type="InterPro" id="IPR013078">
    <property type="entry name" value="His_Pase_superF_clade-1"/>
</dbReference>
<dbReference type="InterPro" id="IPR029033">
    <property type="entry name" value="His_PPase_superfam"/>
</dbReference>
<dbReference type="InterPro" id="IPR001345">
    <property type="entry name" value="PG/BPGM_mutase_AS"/>
</dbReference>
<dbReference type="InterPro" id="IPR005952">
    <property type="entry name" value="Phosphogly_mut1"/>
</dbReference>
<dbReference type="NCBIfam" id="TIGR01258">
    <property type="entry name" value="pgm_1"/>
    <property type="match status" value="1"/>
</dbReference>
<dbReference type="NCBIfam" id="NF010713">
    <property type="entry name" value="PRK14115.1"/>
    <property type="match status" value="1"/>
</dbReference>
<dbReference type="NCBIfam" id="NF010718">
    <property type="entry name" value="PRK14120.1"/>
    <property type="match status" value="1"/>
</dbReference>
<dbReference type="PANTHER" id="PTHR11931">
    <property type="entry name" value="PHOSPHOGLYCERATE MUTASE"/>
    <property type="match status" value="1"/>
</dbReference>
<dbReference type="Pfam" id="PF00300">
    <property type="entry name" value="His_Phos_1"/>
    <property type="match status" value="1"/>
</dbReference>
<dbReference type="PIRSF" id="PIRSF000709">
    <property type="entry name" value="6PFK_2-Ptase"/>
    <property type="match status" value="1"/>
</dbReference>
<dbReference type="SMART" id="SM00855">
    <property type="entry name" value="PGAM"/>
    <property type="match status" value="1"/>
</dbReference>
<dbReference type="SUPFAM" id="SSF53254">
    <property type="entry name" value="Phosphoglycerate mutase-like"/>
    <property type="match status" value="1"/>
</dbReference>
<dbReference type="PROSITE" id="PS00175">
    <property type="entry name" value="PG_MUTASE"/>
    <property type="match status" value="1"/>
</dbReference>
<sequence length="247" mass="27579">MTHTLILLRHGESEWNAKNLFTGWVDVNLTEKGRAEAVRGGELMREAGVLPDVVHTSVQRRAINTACLALDAADRHWIPVRRSWRLNERHYGALQGKNKKETLEAYGEEQFMLWRRSFDVPPPPIEEDSEFSQFGLPQYAGLGDDMPHTECLKDVIARFLPYWESDIVPDLRAGHTVLIAAHGNSLRALVKHLDGISDEDIAGLNIPTGMPLVYELDDDFRPTVPHGRYLDPEAAAAAAAAVANQGR</sequence>
<protein>
    <recommendedName>
        <fullName evidence="1">2,3-bisphosphoglycerate-dependent phosphoglycerate mutase</fullName>
        <shortName evidence="1">BPG-dependent PGAM</shortName>
        <shortName evidence="1">PGAM</shortName>
        <shortName evidence="1">Phosphoglyceromutase</shortName>
        <shortName evidence="1">dPGM</shortName>
        <ecNumber evidence="1">5.4.2.11</ecNumber>
    </recommendedName>
</protein>